<comment type="subcellular location">
    <subcellularLocation>
        <location evidence="2">Cell membrane</location>
        <topology evidence="2">Multi-pass membrane protein</topology>
    </subcellularLocation>
</comment>
<evidence type="ECO:0000255" key="1"/>
<evidence type="ECO:0000305" key="2"/>
<keyword id="KW-1003">Cell membrane</keyword>
<keyword id="KW-0472">Membrane</keyword>
<keyword id="KW-0812">Transmembrane</keyword>
<keyword id="KW-1133">Transmembrane helix</keyword>
<feature type="chain" id="PRO_0000077912" description="Uncharacterized membrane protein VP2115">
    <location>
        <begin position="1"/>
        <end position="441"/>
    </location>
</feature>
<feature type="transmembrane region" description="Helical" evidence="1">
    <location>
        <begin position="21"/>
        <end position="41"/>
    </location>
</feature>
<feature type="transmembrane region" description="Helical" evidence="1">
    <location>
        <begin position="51"/>
        <end position="71"/>
    </location>
</feature>
<feature type="transmembrane region" description="Helical" evidence="1">
    <location>
        <begin position="94"/>
        <end position="114"/>
    </location>
</feature>
<feature type="transmembrane region" description="Helical" evidence="1">
    <location>
        <begin position="118"/>
        <end position="138"/>
    </location>
</feature>
<feature type="transmembrane region" description="Helical" evidence="1">
    <location>
        <begin position="150"/>
        <end position="170"/>
    </location>
</feature>
<feature type="transmembrane region" description="Helical" evidence="1">
    <location>
        <begin position="195"/>
        <end position="215"/>
    </location>
</feature>
<feature type="transmembrane region" description="Helical" evidence="1">
    <location>
        <begin position="239"/>
        <end position="259"/>
    </location>
</feature>
<feature type="transmembrane region" description="Helical" evidence="1">
    <location>
        <begin position="260"/>
        <end position="280"/>
    </location>
</feature>
<feature type="transmembrane region" description="Helical" evidence="1">
    <location>
        <begin position="291"/>
        <end position="311"/>
    </location>
</feature>
<feature type="transmembrane region" description="Helical" evidence="1">
    <location>
        <begin position="334"/>
        <end position="354"/>
    </location>
</feature>
<feature type="transmembrane region" description="Helical" evidence="1">
    <location>
        <begin position="363"/>
        <end position="383"/>
    </location>
</feature>
<feature type="transmembrane region" description="Helical" evidence="1">
    <location>
        <begin position="419"/>
        <end position="439"/>
    </location>
</feature>
<protein>
    <recommendedName>
        <fullName>Uncharacterized membrane protein VP2115</fullName>
    </recommendedName>
    <alternativeName>
        <fullName>ORF3</fullName>
    </alternativeName>
</protein>
<name>Y2115_VIBPA</name>
<proteinExistence type="predicted"/>
<accession>P46231</accession>
<gene>
    <name type="ordered locus">VP2115</name>
</gene>
<organism>
    <name type="scientific">Vibrio parahaemolyticus serotype O3:K6 (strain RIMD 2210633)</name>
    <dbReference type="NCBI Taxonomy" id="223926"/>
    <lineage>
        <taxon>Bacteria</taxon>
        <taxon>Pseudomonadati</taxon>
        <taxon>Pseudomonadota</taxon>
        <taxon>Gammaproteobacteria</taxon>
        <taxon>Vibrionales</taxon>
        <taxon>Vibrionaceae</taxon>
        <taxon>Vibrio</taxon>
    </lineage>
</organism>
<reference key="1">
    <citation type="journal article" date="2003" name="Lancet">
        <title>Genome sequence of Vibrio parahaemolyticus: a pathogenic mechanism distinct from that of V. cholerae.</title>
        <authorList>
            <person name="Makino K."/>
            <person name="Oshima K."/>
            <person name="Kurokawa K."/>
            <person name="Yokoyama K."/>
            <person name="Uda T."/>
            <person name="Tagomori K."/>
            <person name="Iijima Y."/>
            <person name="Najima M."/>
            <person name="Nakano M."/>
            <person name="Yamashita A."/>
            <person name="Kubota Y."/>
            <person name="Kimura S."/>
            <person name="Yasunaga T."/>
            <person name="Honda T."/>
            <person name="Shinagawa H."/>
            <person name="Hattori M."/>
            <person name="Iida T."/>
        </authorList>
    </citation>
    <scope>NUCLEOTIDE SEQUENCE [LARGE SCALE GENOMIC DNA]</scope>
    <source>
        <strain>RIMD 2210633</strain>
    </source>
</reference>
<reference key="2">
    <citation type="journal article" date="1994" name="J. Bacteriol.">
        <title>MotY, a component of the sodium-type flagellar motor.</title>
        <authorList>
            <person name="McCarter L.L."/>
        </authorList>
    </citation>
    <scope>NUCLEOTIDE SEQUENCE [GENOMIC DNA] OF 1-140</scope>
    <source>
        <strain>BB22</strain>
    </source>
</reference>
<dbReference type="EMBL" id="BA000031">
    <property type="protein sequence ID" value="BAC60378.1"/>
    <property type="molecule type" value="Genomic_DNA"/>
</dbReference>
<dbReference type="EMBL" id="U06949">
    <property type="protein sequence ID" value="AAA21571.1"/>
    <property type="molecule type" value="Genomic_DNA"/>
</dbReference>
<dbReference type="RefSeq" id="NP_798494.1">
    <property type="nucleotide sequence ID" value="NC_004603.1"/>
</dbReference>
<dbReference type="RefSeq" id="WP_005490613.1">
    <property type="nucleotide sequence ID" value="NC_004603.1"/>
</dbReference>
<dbReference type="SMR" id="P46231"/>
<dbReference type="GeneID" id="1189627"/>
<dbReference type="KEGG" id="vpa:VP2115"/>
<dbReference type="PATRIC" id="fig|223926.6.peg.2023"/>
<dbReference type="eggNOG" id="COG2056">
    <property type="taxonomic scope" value="Bacteria"/>
</dbReference>
<dbReference type="HOGENOM" id="CLU_037927_0_0_6"/>
<dbReference type="Proteomes" id="UP000002493">
    <property type="component" value="Chromosome 1"/>
</dbReference>
<dbReference type="GO" id="GO:0005886">
    <property type="term" value="C:plasma membrane"/>
    <property type="evidence" value="ECO:0007669"/>
    <property type="project" value="UniProtKB-SubCell"/>
</dbReference>
<dbReference type="InterPro" id="IPR052576">
    <property type="entry name" value="AA_Transporter-Related"/>
</dbReference>
<dbReference type="InterPro" id="IPR018461">
    <property type="entry name" value="Na/H_Antiport_NhaC-like_C"/>
</dbReference>
<dbReference type="InterPro" id="IPR032813">
    <property type="entry name" value="Na_H_antiport_N"/>
</dbReference>
<dbReference type="PANTHER" id="PTHR37821">
    <property type="entry name" value="AMINO ACID TRANSPORTER YUIF-RELATED"/>
    <property type="match status" value="1"/>
</dbReference>
<dbReference type="PANTHER" id="PTHR37821:SF1">
    <property type="entry name" value="AMINO ACID TRANSPORTER YUIF-RELATED"/>
    <property type="match status" value="1"/>
</dbReference>
<dbReference type="Pfam" id="PF13726">
    <property type="entry name" value="Na_H_antiport_2"/>
    <property type="match status" value="1"/>
</dbReference>
<dbReference type="Pfam" id="PF03553">
    <property type="entry name" value="Na_H_antiporter"/>
    <property type="match status" value="1"/>
</dbReference>
<dbReference type="PRINTS" id="PR00173">
    <property type="entry name" value="EDTRNSPORT"/>
</dbReference>
<sequence>MNPVVISVCVMLVLALMRVNVVVALTFSAIVGGLVAGMSLGDTVAAFESGLGGGATIALSYAMLGTFAVAISKSGITDLLAKSVIKRLNGKESAASTTGLKYAVLVALVLVTMSSQNVIPVHIAFIPILIPPLLGVFAKLKLDRRLIACVLTFGLITPYMVLPVGFGGIFLNNILLKNLHDNGLENVVASQVPTAMLLPGAGMIFGLLLAIFVSYRKPREYKETELTVVHETDHSINKQHILVAALGIIAALGVQLYTGSMIIGALAGFMVFTFGGVIAWKETHDVFTKGVHMMAMIGFIMIAAAGFAAVMKQTGGVETLVQSLSTSIGDNKPLAALLMLVVGLLVTMGIGSSFSTIPILATIYVPLSLAFGFSPMATIALVGTAAALGDAGSPASDSTLGPTSGLNADGQHEHIWETVVPTFIHYNIPLIIFGWIAAMVL</sequence>